<proteinExistence type="inferred from homology"/>
<protein>
    <recommendedName>
        <fullName evidence="1">Bifunctional protein GlmU</fullName>
    </recommendedName>
    <domain>
        <recommendedName>
            <fullName evidence="1">UDP-N-acetylglucosamine pyrophosphorylase</fullName>
            <ecNumber evidence="1">2.7.7.23</ecNumber>
        </recommendedName>
        <alternativeName>
            <fullName evidence="1">N-acetylglucosamine-1-phosphate uridyltransferase</fullName>
        </alternativeName>
    </domain>
    <domain>
        <recommendedName>
            <fullName evidence="1">Glucosamine-1-phosphate N-acetyltransferase</fullName>
            <ecNumber evidence="1">2.3.1.157</ecNumber>
        </recommendedName>
    </domain>
</protein>
<comment type="function">
    <text evidence="1">Catalyzes the last two sequential reactions in the de novo biosynthetic pathway for UDP-N-acetylglucosamine (UDP-GlcNAc). The C-terminal domain catalyzes the transfer of acetyl group from acetyl coenzyme A to glucosamine-1-phosphate (GlcN-1-P) to produce N-acetylglucosamine-1-phosphate (GlcNAc-1-P), which is converted into UDP-GlcNAc by the transfer of uridine 5-monophosphate (from uridine 5-triphosphate), a reaction catalyzed by the N-terminal domain.</text>
</comment>
<comment type="catalytic activity">
    <reaction evidence="1">
        <text>alpha-D-glucosamine 1-phosphate + acetyl-CoA = N-acetyl-alpha-D-glucosamine 1-phosphate + CoA + H(+)</text>
        <dbReference type="Rhea" id="RHEA:13725"/>
        <dbReference type="ChEBI" id="CHEBI:15378"/>
        <dbReference type="ChEBI" id="CHEBI:57287"/>
        <dbReference type="ChEBI" id="CHEBI:57288"/>
        <dbReference type="ChEBI" id="CHEBI:57776"/>
        <dbReference type="ChEBI" id="CHEBI:58516"/>
        <dbReference type="EC" id="2.3.1.157"/>
    </reaction>
</comment>
<comment type="catalytic activity">
    <reaction evidence="1">
        <text>N-acetyl-alpha-D-glucosamine 1-phosphate + UTP + H(+) = UDP-N-acetyl-alpha-D-glucosamine + diphosphate</text>
        <dbReference type="Rhea" id="RHEA:13509"/>
        <dbReference type="ChEBI" id="CHEBI:15378"/>
        <dbReference type="ChEBI" id="CHEBI:33019"/>
        <dbReference type="ChEBI" id="CHEBI:46398"/>
        <dbReference type="ChEBI" id="CHEBI:57705"/>
        <dbReference type="ChEBI" id="CHEBI:57776"/>
        <dbReference type="EC" id="2.7.7.23"/>
    </reaction>
</comment>
<comment type="cofactor">
    <cofactor evidence="1">
        <name>Mg(2+)</name>
        <dbReference type="ChEBI" id="CHEBI:18420"/>
    </cofactor>
    <text evidence="1">Binds 1 Mg(2+) ion per subunit.</text>
</comment>
<comment type="pathway">
    <text evidence="1">Nucleotide-sugar biosynthesis; UDP-N-acetyl-alpha-D-glucosamine biosynthesis; N-acetyl-alpha-D-glucosamine 1-phosphate from alpha-D-glucosamine 6-phosphate (route II): step 2/2.</text>
</comment>
<comment type="pathway">
    <text evidence="1">Nucleotide-sugar biosynthesis; UDP-N-acetyl-alpha-D-glucosamine biosynthesis; UDP-N-acetyl-alpha-D-glucosamine from N-acetyl-alpha-D-glucosamine 1-phosphate: step 1/1.</text>
</comment>
<comment type="pathway">
    <text evidence="1">Bacterial outer membrane biogenesis; LPS lipid A biosynthesis.</text>
</comment>
<comment type="subunit">
    <text evidence="1">Homotrimer.</text>
</comment>
<comment type="subcellular location">
    <subcellularLocation>
        <location evidence="1">Cytoplasm</location>
    </subcellularLocation>
</comment>
<comment type="similarity">
    <text evidence="1">In the N-terminal section; belongs to the N-acetylglucosamine-1-phosphate uridyltransferase family.</text>
</comment>
<comment type="similarity">
    <text evidence="1">In the C-terminal section; belongs to the transferase hexapeptide repeat family.</text>
</comment>
<keyword id="KW-0012">Acyltransferase</keyword>
<keyword id="KW-0133">Cell shape</keyword>
<keyword id="KW-0961">Cell wall biogenesis/degradation</keyword>
<keyword id="KW-0963">Cytoplasm</keyword>
<keyword id="KW-0460">Magnesium</keyword>
<keyword id="KW-0479">Metal-binding</keyword>
<keyword id="KW-0511">Multifunctional enzyme</keyword>
<keyword id="KW-0548">Nucleotidyltransferase</keyword>
<keyword id="KW-0573">Peptidoglycan synthesis</keyword>
<keyword id="KW-1185">Reference proteome</keyword>
<keyword id="KW-0677">Repeat</keyword>
<keyword id="KW-0808">Transferase</keyword>
<dbReference type="EC" id="2.7.7.23" evidence="1"/>
<dbReference type="EC" id="2.3.1.157" evidence="1"/>
<dbReference type="EMBL" id="CP001219">
    <property type="protein sequence ID" value="ACK77952.1"/>
    <property type="molecule type" value="Genomic_DNA"/>
</dbReference>
<dbReference type="RefSeq" id="WP_012537654.1">
    <property type="nucleotide sequence ID" value="NC_011761.1"/>
</dbReference>
<dbReference type="SMR" id="B7JB82"/>
<dbReference type="STRING" id="243159.AFE_3201"/>
<dbReference type="PaxDb" id="243159-AFE_3201"/>
<dbReference type="GeneID" id="65282185"/>
<dbReference type="KEGG" id="afr:AFE_3201"/>
<dbReference type="eggNOG" id="COG1207">
    <property type="taxonomic scope" value="Bacteria"/>
</dbReference>
<dbReference type="HOGENOM" id="CLU_029499_15_2_6"/>
<dbReference type="UniPathway" id="UPA00113">
    <property type="reaction ID" value="UER00532"/>
</dbReference>
<dbReference type="UniPathway" id="UPA00113">
    <property type="reaction ID" value="UER00533"/>
</dbReference>
<dbReference type="UniPathway" id="UPA00973"/>
<dbReference type="Proteomes" id="UP000001362">
    <property type="component" value="Chromosome"/>
</dbReference>
<dbReference type="GO" id="GO:0005737">
    <property type="term" value="C:cytoplasm"/>
    <property type="evidence" value="ECO:0007669"/>
    <property type="project" value="UniProtKB-SubCell"/>
</dbReference>
<dbReference type="GO" id="GO:0016020">
    <property type="term" value="C:membrane"/>
    <property type="evidence" value="ECO:0007669"/>
    <property type="project" value="GOC"/>
</dbReference>
<dbReference type="GO" id="GO:0019134">
    <property type="term" value="F:glucosamine-1-phosphate N-acetyltransferase activity"/>
    <property type="evidence" value="ECO:0007669"/>
    <property type="project" value="UniProtKB-UniRule"/>
</dbReference>
<dbReference type="GO" id="GO:0000287">
    <property type="term" value="F:magnesium ion binding"/>
    <property type="evidence" value="ECO:0007669"/>
    <property type="project" value="UniProtKB-UniRule"/>
</dbReference>
<dbReference type="GO" id="GO:0003977">
    <property type="term" value="F:UDP-N-acetylglucosamine diphosphorylase activity"/>
    <property type="evidence" value="ECO:0007669"/>
    <property type="project" value="UniProtKB-UniRule"/>
</dbReference>
<dbReference type="GO" id="GO:0000902">
    <property type="term" value="P:cell morphogenesis"/>
    <property type="evidence" value="ECO:0007669"/>
    <property type="project" value="UniProtKB-UniRule"/>
</dbReference>
<dbReference type="GO" id="GO:0071555">
    <property type="term" value="P:cell wall organization"/>
    <property type="evidence" value="ECO:0007669"/>
    <property type="project" value="UniProtKB-KW"/>
</dbReference>
<dbReference type="GO" id="GO:0009245">
    <property type="term" value="P:lipid A biosynthetic process"/>
    <property type="evidence" value="ECO:0007669"/>
    <property type="project" value="UniProtKB-UniRule"/>
</dbReference>
<dbReference type="GO" id="GO:0009252">
    <property type="term" value="P:peptidoglycan biosynthetic process"/>
    <property type="evidence" value="ECO:0007669"/>
    <property type="project" value="UniProtKB-UniRule"/>
</dbReference>
<dbReference type="GO" id="GO:0008360">
    <property type="term" value="P:regulation of cell shape"/>
    <property type="evidence" value="ECO:0007669"/>
    <property type="project" value="UniProtKB-KW"/>
</dbReference>
<dbReference type="GO" id="GO:0006048">
    <property type="term" value="P:UDP-N-acetylglucosamine biosynthetic process"/>
    <property type="evidence" value="ECO:0007669"/>
    <property type="project" value="UniProtKB-UniPathway"/>
</dbReference>
<dbReference type="CDD" id="cd02540">
    <property type="entry name" value="GT2_GlmU_N_bac"/>
    <property type="match status" value="1"/>
</dbReference>
<dbReference type="CDD" id="cd03353">
    <property type="entry name" value="LbH_GlmU_C"/>
    <property type="match status" value="1"/>
</dbReference>
<dbReference type="Gene3D" id="2.160.10.10">
    <property type="entry name" value="Hexapeptide repeat proteins"/>
    <property type="match status" value="1"/>
</dbReference>
<dbReference type="Gene3D" id="3.90.550.10">
    <property type="entry name" value="Spore Coat Polysaccharide Biosynthesis Protein SpsA, Chain A"/>
    <property type="match status" value="1"/>
</dbReference>
<dbReference type="HAMAP" id="MF_01631">
    <property type="entry name" value="GlmU"/>
    <property type="match status" value="1"/>
</dbReference>
<dbReference type="InterPro" id="IPR005882">
    <property type="entry name" value="Bifunctional_GlmU"/>
</dbReference>
<dbReference type="InterPro" id="IPR050065">
    <property type="entry name" value="GlmU-like"/>
</dbReference>
<dbReference type="InterPro" id="IPR038009">
    <property type="entry name" value="GlmU_C_LbH"/>
</dbReference>
<dbReference type="InterPro" id="IPR001451">
    <property type="entry name" value="Hexapep"/>
</dbReference>
<dbReference type="InterPro" id="IPR018357">
    <property type="entry name" value="Hexapep_transf_CS"/>
</dbReference>
<dbReference type="InterPro" id="IPR025877">
    <property type="entry name" value="MobA-like_NTP_Trfase"/>
</dbReference>
<dbReference type="InterPro" id="IPR029044">
    <property type="entry name" value="Nucleotide-diphossugar_trans"/>
</dbReference>
<dbReference type="InterPro" id="IPR011004">
    <property type="entry name" value="Trimer_LpxA-like_sf"/>
</dbReference>
<dbReference type="NCBIfam" id="TIGR01173">
    <property type="entry name" value="glmU"/>
    <property type="match status" value="1"/>
</dbReference>
<dbReference type="PANTHER" id="PTHR43584:SF3">
    <property type="entry name" value="BIFUNCTIONAL PROTEIN GLMU"/>
    <property type="match status" value="1"/>
</dbReference>
<dbReference type="PANTHER" id="PTHR43584">
    <property type="entry name" value="NUCLEOTIDYL TRANSFERASE"/>
    <property type="match status" value="1"/>
</dbReference>
<dbReference type="Pfam" id="PF00132">
    <property type="entry name" value="Hexapep"/>
    <property type="match status" value="2"/>
</dbReference>
<dbReference type="Pfam" id="PF12804">
    <property type="entry name" value="NTP_transf_3"/>
    <property type="match status" value="1"/>
</dbReference>
<dbReference type="SUPFAM" id="SSF53448">
    <property type="entry name" value="Nucleotide-diphospho-sugar transferases"/>
    <property type="match status" value="1"/>
</dbReference>
<dbReference type="SUPFAM" id="SSF51161">
    <property type="entry name" value="Trimeric LpxA-like enzymes"/>
    <property type="match status" value="1"/>
</dbReference>
<dbReference type="PROSITE" id="PS00101">
    <property type="entry name" value="HEXAPEP_TRANSFERASES"/>
    <property type="match status" value="1"/>
</dbReference>
<evidence type="ECO:0000255" key="1">
    <source>
        <dbReference type="HAMAP-Rule" id="MF_01631"/>
    </source>
</evidence>
<evidence type="ECO:0000256" key="2">
    <source>
        <dbReference type="SAM" id="MobiDB-lite"/>
    </source>
</evidence>
<gene>
    <name evidence="1" type="primary">glmU</name>
    <name type="ordered locus">AFE_3201</name>
</gene>
<reference key="1">
    <citation type="journal article" date="2008" name="BMC Genomics">
        <title>Acidithiobacillus ferrooxidans metabolism: from genome sequence to industrial applications.</title>
        <authorList>
            <person name="Valdes J."/>
            <person name="Pedroso I."/>
            <person name="Quatrini R."/>
            <person name="Dodson R.J."/>
            <person name="Tettelin H."/>
            <person name="Blake R. II"/>
            <person name="Eisen J.A."/>
            <person name="Holmes D.S."/>
        </authorList>
    </citation>
    <scope>NUCLEOTIDE SEQUENCE [LARGE SCALE GENOMIC DNA]</scope>
    <source>
        <strain>ATCC 23270 / DSM 14882 / CIP 104768 / NCIMB 8455</strain>
    </source>
</reference>
<accession>B7JB82</accession>
<name>GLMU_ACIF2</name>
<feature type="chain" id="PRO_1000186384" description="Bifunctional protein GlmU">
    <location>
        <begin position="1"/>
        <end position="455"/>
    </location>
</feature>
<feature type="region of interest" description="Pyrophosphorylase" evidence="1">
    <location>
        <begin position="1"/>
        <end position="227"/>
    </location>
</feature>
<feature type="region of interest" description="Linker" evidence="1">
    <location>
        <begin position="228"/>
        <end position="248"/>
    </location>
</feature>
<feature type="region of interest" description="N-acetyltransferase" evidence="1">
    <location>
        <begin position="249"/>
        <end position="455"/>
    </location>
</feature>
<feature type="region of interest" description="Disordered" evidence="2">
    <location>
        <begin position="420"/>
        <end position="455"/>
    </location>
</feature>
<feature type="active site" description="Proton acceptor" evidence="1">
    <location>
        <position position="361"/>
    </location>
</feature>
<feature type="binding site" evidence="1">
    <location>
        <begin position="8"/>
        <end position="11"/>
    </location>
    <ligand>
        <name>UDP-N-acetyl-alpha-D-glucosamine</name>
        <dbReference type="ChEBI" id="CHEBI:57705"/>
    </ligand>
</feature>
<feature type="binding site" evidence="1">
    <location>
        <position position="22"/>
    </location>
    <ligand>
        <name>UDP-N-acetyl-alpha-D-glucosamine</name>
        <dbReference type="ChEBI" id="CHEBI:57705"/>
    </ligand>
</feature>
<feature type="binding site" evidence="1">
    <location>
        <position position="73"/>
    </location>
    <ligand>
        <name>UDP-N-acetyl-alpha-D-glucosamine</name>
        <dbReference type="ChEBI" id="CHEBI:57705"/>
    </ligand>
</feature>
<feature type="binding site" evidence="1">
    <location>
        <begin position="78"/>
        <end position="79"/>
    </location>
    <ligand>
        <name>UDP-N-acetyl-alpha-D-glucosamine</name>
        <dbReference type="ChEBI" id="CHEBI:57705"/>
    </ligand>
</feature>
<feature type="binding site" evidence="1">
    <location>
        <begin position="100"/>
        <end position="102"/>
    </location>
    <ligand>
        <name>UDP-N-acetyl-alpha-D-glucosamine</name>
        <dbReference type="ChEBI" id="CHEBI:57705"/>
    </ligand>
</feature>
<feature type="binding site" evidence="1">
    <location>
        <position position="102"/>
    </location>
    <ligand>
        <name>Mg(2+)</name>
        <dbReference type="ChEBI" id="CHEBI:18420"/>
    </ligand>
</feature>
<feature type="binding site" evidence="1">
    <location>
        <position position="137"/>
    </location>
    <ligand>
        <name>UDP-N-acetyl-alpha-D-glucosamine</name>
        <dbReference type="ChEBI" id="CHEBI:57705"/>
    </ligand>
</feature>
<feature type="binding site" evidence="1">
    <location>
        <position position="152"/>
    </location>
    <ligand>
        <name>UDP-N-acetyl-alpha-D-glucosamine</name>
        <dbReference type="ChEBI" id="CHEBI:57705"/>
    </ligand>
</feature>
<feature type="binding site" evidence="1">
    <location>
        <position position="167"/>
    </location>
    <ligand>
        <name>UDP-N-acetyl-alpha-D-glucosamine</name>
        <dbReference type="ChEBI" id="CHEBI:57705"/>
    </ligand>
</feature>
<feature type="binding site" evidence="1">
    <location>
        <position position="225"/>
    </location>
    <ligand>
        <name>Mg(2+)</name>
        <dbReference type="ChEBI" id="CHEBI:18420"/>
    </ligand>
</feature>
<feature type="binding site" evidence="1">
    <location>
        <position position="225"/>
    </location>
    <ligand>
        <name>UDP-N-acetyl-alpha-D-glucosamine</name>
        <dbReference type="ChEBI" id="CHEBI:57705"/>
    </ligand>
</feature>
<feature type="binding site" evidence="1">
    <location>
        <position position="331"/>
    </location>
    <ligand>
        <name>UDP-N-acetyl-alpha-D-glucosamine</name>
        <dbReference type="ChEBI" id="CHEBI:57705"/>
    </ligand>
</feature>
<feature type="binding site" evidence="1">
    <location>
        <position position="349"/>
    </location>
    <ligand>
        <name>UDP-N-acetyl-alpha-D-glucosamine</name>
        <dbReference type="ChEBI" id="CHEBI:57705"/>
    </ligand>
</feature>
<feature type="binding site" evidence="1">
    <location>
        <position position="364"/>
    </location>
    <ligand>
        <name>UDP-N-acetyl-alpha-D-glucosamine</name>
        <dbReference type="ChEBI" id="CHEBI:57705"/>
    </ligand>
</feature>
<feature type="binding site" evidence="1">
    <location>
        <position position="375"/>
    </location>
    <ligand>
        <name>UDP-N-acetyl-alpha-D-glucosamine</name>
        <dbReference type="ChEBI" id="CHEBI:57705"/>
    </ligand>
</feature>
<feature type="binding site" evidence="1">
    <location>
        <position position="378"/>
    </location>
    <ligand>
        <name>acetyl-CoA</name>
        <dbReference type="ChEBI" id="CHEBI:57288"/>
    </ligand>
</feature>
<feature type="binding site" evidence="1">
    <location>
        <begin position="384"/>
        <end position="385"/>
    </location>
    <ligand>
        <name>acetyl-CoA</name>
        <dbReference type="ChEBI" id="CHEBI:57288"/>
    </ligand>
</feature>
<feature type="binding site" evidence="1">
    <location>
        <position position="403"/>
    </location>
    <ligand>
        <name>acetyl-CoA</name>
        <dbReference type="ChEBI" id="CHEBI:57288"/>
    </ligand>
</feature>
<feature type="binding site" evidence="1">
    <location>
        <position position="421"/>
    </location>
    <ligand>
        <name>acetyl-CoA</name>
        <dbReference type="ChEBI" id="CHEBI:57288"/>
    </ligand>
</feature>
<feature type="binding site" evidence="1">
    <location>
        <position position="438"/>
    </location>
    <ligand>
        <name>acetyl-CoA</name>
        <dbReference type="ChEBI" id="CHEBI:57288"/>
    </ligand>
</feature>
<sequence>MLTDIVILAAGQGTRMHSALPKVLQPLGGKPMLAHVLATATDLAVRRIHIVVGFGGDAVQAAFPDTQASWWIQAQQLGTGDALKSALPGLTGADRVLVLYGDVPLLTAATLREFLQQTPVTALGLTTASVSEPHGYGRILRDADGQVQGIREHKDCQTDEQAICEINLGMMVLPVQPLAGWLQGLSARNAQGEIYLTDVVAAARADGYVVWPFTLADATEALGVNDPVQLAILERVFQRQQLRALQMQGLRVADPARVDIRGELTCGQDCWVDPNVLFVGEVHLGHRVRVGAGAVLQDARIGDDVEILPYSHIEGAQIGAGARIGPFARIRPGTEIGEAAHIGNYVEVKAAKIGAGSKANHLSYLGDAEIGTGVNVGAGTITCNYDGANKHRTIIGNDVFIGSDSQLVAPVNIGDGATIGAGSTITKEVPPGGLTLSRSPQRTIPHWQRPRRDKK</sequence>
<organism>
    <name type="scientific">Acidithiobacillus ferrooxidans (strain ATCC 23270 / DSM 14882 / CIP 104768 / NCIMB 8455)</name>
    <name type="common">Ferrobacillus ferrooxidans (strain ATCC 23270)</name>
    <dbReference type="NCBI Taxonomy" id="243159"/>
    <lineage>
        <taxon>Bacteria</taxon>
        <taxon>Pseudomonadati</taxon>
        <taxon>Pseudomonadota</taxon>
        <taxon>Acidithiobacillia</taxon>
        <taxon>Acidithiobacillales</taxon>
        <taxon>Acidithiobacillaceae</taxon>
        <taxon>Acidithiobacillus</taxon>
    </lineage>
</organism>